<accession>Q92QT4</accession>
<dbReference type="EC" id="2.3.1.180" evidence="1"/>
<dbReference type="EMBL" id="AL591688">
    <property type="protein sequence ID" value="CAC45802.1"/>
    <property type="molecule type" value="Genomic_DNA"/>
</dbReference>
<dbReference type="RefSeq" id="NP_385329.1">
    <property type="nucleotide sequence ID" value="NC_003047.1"/>
</dbReference>
<dbReference type="RefSeq" id="WP_003529280.1">
    <property type="nucleotide sequence ID" value="NC_003047.1"/>
</dbReference>
<dbReference type="SMR" id="Q92QT4"/>
<dbReference type="EnsemblBacteria" id="CAC45802">
    <property type="protein sequence ID" value="CAC45802"/>
    <property type="gene ID" value="SMc01785"/>
</dbReference>
<dbReference type="KEGG" id="sme:SMc01785"/>
<dbReference type="PATRIC" id="fig|266834.11.peg.2635"/>
<dbReference type="eggNOG" id="COG0332">
    <property type="taxonomic scope" value="Bacteria"/>
</dbReference>
<dbReference type="HOGENOM" id="CLU_039592_3_1_5"/>
<dbReference type="OrthoDB" id="9815506at2"/>
<dbReference type="UniPathway" id="UPA00094"/>
<dbReference type="Proteomes" id="UP000001976">
    <property type="component" value="Chromosome"/>
</dbReference>
<dbReference type="GO" id="GO:0005737">
    <property type="term" value="C:cytoplasm"/>
    <property type="evidence" value="ECO:0007669"/>
    <property type="project" value="UniProtKB-SubCell"/>
</dbReference>
<dbReference type="GO" id="GO:0004315">
    <property type="term" value="F:3-oxoacyl-[acyl-carrier-protein] synthase activity"/>
    <property type="evidence" value="ECO:0007669"/>
    <property type="project" value="InterPro"/>
</dbReference>
<dbReference type="GO" id="GO:0033818">
    <property type="term" value="F:beta-ketoacyl-acyl-carrier-protein synthase III activity"/>
    <property type="evidence" value="ECO:0007669"/>
    <property type="project" value="UniProtKB-UniRule"/>
</dbReference>
<dbReference type="GO" id="GO:0006633">
    <property type="term" value="P:fatty acid biosynthetic process"/>
    <property type="evidence" value="ECO:0007669"/>
    <property type="project" value="UniProtKB-UniRule"/>
</dbReference>
<dbReference type="GO" id="GO:0044550">
    <property type="term" value="P:secondary metabolite biosynthetic process"/>
    <property type="evidence" value="ECO:0007669"/>
    <property type="project" value="TreeGrafter"/>
</dbReference>
<dbReference type="CDD" id="cd00830">
    <property type="entry name" value="KAS_III"/>
    <property type="match status" value="1"/>
</dbReference>
<dbReference type="FunFam" id="3.40.47.10:FF:000004">
    <property type="entry name" value="3-oxoacyl-[acyl-carrier-protein] synthase 3"/>
    <property type="match status" value="1"/>
</dbReference>
<dbReference type="Gene3D" id="3.40.47.10">
    <property type="match status" value="1"/>
</dbReference>
<dbReference type="HAMAP" id="MF_01815">
    <property type="entry name" value="FabH"/>
    <property type="match status" value="1"/>
</dbReference>
<dbReference type="InterPro" id="IPR013747">
    <property type="entry name" value="ACP_syn_III_C"/>
</dbReference>
<dbReference type="InterPro" id="IPR013751">
    <property type="entry name" value="ACP_syn_III_N"/>
</dbReference>
<dbReference type="InterPro" id="IPR004655">
    <property type="entry name" value="FabH"/>
</dbReference>
<dbReference type="InterPro" id="IPR016039">
    <property type="entry name" value="Thiolase-like"/>
</dbReference>
<dbReference type="NCBIfam" id="TIGR00747">
    <property type="entry name" value="fabH"/>
    <property type="match status" value="1"/>
</dbReference>
<dbReference type="NCBIfam" id="NF006829">
    <property type="entry name" value="PRK09352.1"/>
    <property type="match status" value="1"/>
</dbReference>
<dbReference type="PANTHER" id="PTHR34069">
    <property type="entry name" value="3-OXOACYL-[ACYL-CARRIER-PROTEIN] SYNTHASE 3"/>
    <property type="match status" value="1"/>
</dbReference>
<dbReference type="PANTHER" id="PTHR34069:SF2">
    <property type="entry name" value="BETA-KETOACYL-[ACYL-CARRIER-PROTEIN] SYNTHASE III"/>
    <property type="match status" value="1"/>
</dbReference>
<dbReference type="Pfam" id="PF08545">
    <property type="entry name" value="ACP_syn_III"/>
    <property type="match status" value="1"/>
</dbReference>
<dbReference type="Pfam" id="PF08541">
    <property type="entry name" value="ACP_syn_III_C"/>
    <property type="match status" value="1"/>
</dbReference>
<dbReference type="SUPFAM" id="SSF53901">
    <property type="entry name" value="Thiolase-like"/>
    <property type="match status" value="1"/>
</dbReference>
<gene>
    <name evidence="1" type="primary">fabH</name>
    <name type="ordered locus">R01223</name>
    <name type="ORF">SMc01785</name>
</gene>
<keyword id="KW-0012">Acyltransferase</keyword>
<keyword id="KW-0963">Cytoplasm</keyword>
<keyword id="KW-0275">Fatty acid biosynthesis</keyword>
<keyword id="KW-0276">Fatty acid metabolism</keyword>
<keyword id="KW-0444">Lipid biosynthesis</keyword>
<keyword id="KW-0443">Lipid metabolism</keyword>
<keyword id="KW-0511">Multifunctional enzyme</keyword>
<keyword id="KW-1185">Reference proteome</keyword>
<keyword id="KW-0808">Transferase</keyword>
<sequence>MIRSVVRGFGAALPKRVMTNKEIESRVDTSDEWIVQRTGIRQRYIAGEGETSASLGEAAARAALERAGLTPDDVDLIIVATSTPDNTFPATAVNIQNRLGMRHGAAFDMQAVCSGFVYAVATADAYIRGGLSKRALVIGAETFSRLLDWTDRTTCVLFGDGAGAIVLEAQEAAGTKADRGVLTAQLRSDGAHRDKLYVDGGPSTTGTVGHLRMEGREVFKHAVGMITDVIEAAFEATGTTADDIDWLVPHQANRRIIDGSAKKLGIPLEKVVVTVDLHGNTSAASIPLALDAAASDGRIKKGDLVMLEAMGGGFTWGSVLLRW</sequence>
<protein>
    <recommendedName>
        <fullName evidence="1">Beta-ketoacyl-[acyl-carrier-protein] synthase III</fullName>
        <shortName evidence="1">Beta-ketoacyl-ACP synthase III</shortName>
        <shortName evidence="1">KAS III</shortName>
        <ecNumber evidence="1">2.3.1.180</ecNumber>
    </recommendedName>
    <alternativeName>
        <fullName evidence="1">3-oxoacyl-[acyl-carrier-protein] synthase 3</fullName>
    </alternativeName>
    <alternativeName>
        <fullName evidence="1">3-oxoacyl-[acyl-carrier-protein] synthase III</fullName>
    </alternativeName>
</protein>
<feature type="chain" id="PRO_0000110458" description="Beta-ketoacyl-[acyl-carrier-protein] synthase III">
    <location>
        <begin position="1"/>
        <end position="323"/>
    </location>
</feature>
<feature type="region of interest" description="ACP-binding" evidence="1">
    <location>
        <begin position="251"/>
        <end position="255"/>
    </location>
</feature>
<feature type="active site" evidence="1">
    <location>
        <position position="113"/>
    </location>
</feature>
<feature type="active site" evidence="1">
    <location>
        <position position="250"/>
    </location>
</feature>
<feature type="active site" evidence="1">
    <location>
        <position position="280"/>
    </location>
</feature>
<evidence type="ECO:0000255" key="1">
    <source>
        <dbReference type="HAMAP-Rule" id="MF_01815"/>
    </source>
</evidence>
<organism>
    <name type="scientific">Rhizobium meliloti (strain 1021)</name>
    <name type="common">Ensifer meliloti</name>
    <name type="synonym">Sinorhizobium meliloti</name>
    <dbReference type="NCBI Taxonomy" id="266834"/>
    <lineage>
        <taxon>Bacteria</taxon>
        <taxon>Pseudomonadati</taxon>
        <taxon>Pseudomonadota</taxon>
        <taxon>Alphaproteobacteria</taxon>
        <taxon>Hyphomicrobiales</taxon>
        <taxon>Rhizobiaceae</taxon>
        <taxon>Sinorhizobium/Ensifer group</taxon>
        <taxon>Sinorhizobium</taxon>
    </lineage>
</organism>
<name>FABH_RHIME</name>
<comment type="function">
    <text evidence="1">Catalyzes the condensation reaction of fatty acid synthesis by the addition to an acyl acceptor of two carbons from malonyl-ACP. Catalyzes the first condensation reaction which initiates fatty acid synthesis and may therefore play a role in governing the total rate of fatty acid production. Possesses both acetoacetyl-ACP synthase and acetyl transacylase activities. Its substrate specificity determines the biosynthesis of branched-chain and/or straight-chain of fatty acids.</text>
</comment>
<comment type="catalytic activity">
    <reaction evidence="1">
        <text>malonyl-[ACP] + acetyl-CoA + H(+) = 3-oxobutanoyl-[ACP] + CO2 + CoA</text>
        <dbReference type="Rhea" id="RHEA:12080"/>
        <dbReference type="Rhea" id="RHEA-COMP:9623"/>
        <dbReference type="Rhea" id="RHEA-COMP:9625"/>
        <dbReference type="ChEBI" id="CHEBI:15378"/>
        <dbReference type="ChEBI" id="CHEBI:16526"/>
        <dbReference type="ChEBI" id="CHEBI:57287"/>
        <dbReference type="ChEBI" id="CHEBI:57288"/>
        <dbReference type="ChEBI" id="CHEBI:78449"/>
        <dbReference type="ChEBI" id="CHEBI:78450"/>
        <dbReference type="EC" id="2.3.1.180"/>
    </reaction>
</comment>
<comment type="pathway">
    <text evidence="1">Lipid metabolism; fatty acid biosynthesis.</text>
</comment>
<comment type="subunit">
    <text evidence="1">Homodimer.</text>
</comment>
<comment type="subcellular location">
    <subcellularLocation>
        <location evidence="1">Cytoplasm</location>
    </subcellularLocation>
</comment>
<comment type="domain">
    <text evidence="1">The last Arg residue of the ACP-binding site is essential for the weak association between ACP/AcpP and FabH.</text>
</comment>
<comment type="similarity">
    <text evidence="1">Belongs to the thiolase-like superfamily. FabH family.</text>
</comment>
<proteinExistence type="inferred from homology"/>
<reference key="1">
    <citation type="journal article" date="2001" name="Proc. Natl. Acad. Sci. U.S.A.">
        <title>Analysis of the chromosome sequence of the legume symbiont Sinorhizobium meliloti strain 1021.</title>
        <authorList>
            <person name="Capela D."/>
            <person name="Barloy-Hubler F."/>
            <person name="Gouzy J."/>
            <person name="Bothe G."/>
            <person name="Ampe F."/>
            <person name="Batut J."/>
            <person name="Boistard P."/>
            <person name="Becker A."/>
            <person name="Boutry M."/>
            <person name="Cadieu E."/>
            <person name="Dreano S."/>
            <person name="Gloux S."/>
            <person name="Godrie T."/>
            <person name="Goffeau A."/>
            <person name="Kahn D."/>
            <person name="Kiss E."/>
            <person name="Lelaure V."/>
            <person name="Masuy D."/>
            <person name="Pohl T."/>
            <person name="Portetelle D."/>
            <person name="Puehler A."/>
            <person name="Purnelle B."/>
            <person name="Ramsperger U."/>
            <person name="Renard C."/>
            <person name="Thebault P."/>
            <person name="Vandenbol M."/>
            <person name="Weidner S."/>
            <person name="Galibert F."/>
        </authorList>
    </citation>
    <scope>NUCLEOTIDE SEQUENCE [LARGE SCALE GENOMIC DNA]</scope>
    <source>
        <strain>1021</strain>
    </source>
</reference>
<reference key="2">
    <citation type="journal article" date="2001" name="Science">
        <title>The composite genome of the legume symbiont Sinorhizobium meliloti.</title>
        <authorList>
            <person name="Galibert F."/>
            <person name="Finan T.M."/>
            <person name="Long S.R."/>
            <person name="Puehler A."/>
            <person name="Abola P."/>
            <person name="Ampe F."/>
            <person name="Barloy-Hubler F."/>
            <person name="Barnett M.J."/>
            <person name="Becker A."/>
            <person name="Boistard P."/>
            <person name="Bothe G."/>
            <person name="Boutry M."/>
            <person name="Bowser L."/>
            <person name="Buhrmester J."/>
            <person name="Cadieu E."/>
            <person name="Capela D."/>
            <person name="Chain P."/>
            <person name="Cowie A."/>
            <person name="Davis R.W."/>
            <person name="Dreano S."/>
            <person name="Federspiel N.A."/>
            <person name="Fisher R.F."/>
            <person name="Gloux S."/>
            <person name="Godrie T."/>
            <person name="Goffeau A."/>
            <person name="Golding B."/>
            <person name="Gouzy J."/>
            <person name="Gurjal M."/>
            <person name="Hernandez-Lucas I."/>
            <person name="Hong A."/>
            <person name="Huizar L."/>
            <person name="Hyman R.W."/>
            <person name="Jones T."/>
            <person name="Kahn D."/>
            <person name="Kahn M.L."/>
            <person name="Kalman S."/>
            <person name="Keating D.H."/>
            <person name="Kiss E."/>
            <person name="Komp C."/>
            <person name="Lelaure V."/>
            <person name="Masuy D."/>
            <person name="Palm C."/>
            <person name="Peck M.C."/>
            <person name="Pohl T.M."/>
            <person name="Portetelle D."/>
            <person name="Purnelle B."/>
            <person name="Ramsperger U."/>
            <person name="Surzycki R."/>
            <person name="Thebault P."/>
            <person name="Vandenbol M."/>
            <person name="Vorhoelter F.J."/>
            <person name="Weidner S."/>
            <person name="Wells D.H."/>
            <person name="Wong K."/>
            <person name="Yeh K.-C."/>
            <person name="Batut J."/>
        </authorList>
    </citation>
    <scope>NUCLEOTIDE SEQUENCE [LARGE SCALE GENOMIC DNA]</scope>
    <source>
        <strain>1021</strain>
    </source>
</reference>